<accession>C0HKE5</accession>
<accession>P10812</accession>
<accession>P22752</accession>
<accession>Q149U0</accession>
<accession>Q5SZZ2</accession>
<feature type="initiator methionine" description="Removed" evidence="1">
    <location>
        <position position="1"/>
    </location>
</feature>
<feature type="chain" id="PRO_0000439719" description="Histone H2A type 1-G">
    <location>
        <begin position="2"/>
        <end position="130"/>
    </location>
</feature>
<feature type="region of interest" description="Disordered" evidence="4">
    <location>
        <begin position="1"/>
        <end position="22"/>
    </location>
</feature>
<feature type="compositionally biased region" description="Basic residues" evidence="4">
    <location>
        <begin position="7"/>
        <end position="19"/>
    </location>
</feature>
<feature type="modified residue" description="N-acetylserine" evidence="12">
    <location>
        <position position="2"/>
    </location>
</feature>
<feature type="modified residue" description="Phosphoserine; by RPS6KA5" evidence="12">
    <location>
        <position position="2"/>
    </location>
</feature>
<feature type="modified residue" description="Citrulline; alternate" evidence="3">
    <location>
        <position position="4"/>
    </location>
</feature>
<feature type="modified residue" description="Symmetric dimethylarginine; by PRMT5; alternate" evidence="7">
    <location>
        <position position="4"/>
    </location>
</feature>
<feature type="modified residue" description="N6-(2-hydroxyisobutyryl)lysine; alternate" evidence="10">
    <location>
        <position position="6"/>
    </location>
</feature>
<feature type="modified residue" description="N6-(beta-hydroxybutyryl)lysine; alternate" evidence="11">
    <location>
        <position position="6"/>
    </location>
</feature>
<feature type="modified residue" description="N6-acetyllysine; alternate" evidence="12">
    <location>
        <position position="6"/>
    </location>
</feature>
<feature type="modified residue" description="N6-(2-hydroxyisobutyryl)lysine; alternate" evidence="10">
    <location>
        <position position="10"/>
    </location>
</feature>
<feature type="modified residue" description="N6-lactoyllysine; alternate" evidence="2">
    <location>
        <position position="10"/>
    </location>
</feature>
<feature type="modified residue" description="N6-succinyllysine; alternate" evidence="1">
    <location>
        <position position="10"/>
    </location>
</feature>
<feature type="modified residue" description="N6-(2-hydroxyisobutyryl)lysine; alternate" evidence="10">
    <location>
        <position position="37"/>
    </location>
</feature>
<feature type="modified residue" description="N6-(beta-hydroxybutyryl)lysine; alternate" evidence="11">
    <location>
        <position position="37"/>
    </location>
</feature>
<feature type="modified residue" description="N6-crotonyllysine; alternate" evidence="8">
    <location>
        <position position="37"/>
    </location>
</feature>
<feature type="modified residue" description="N6-(2-hydroxyisobutyryl)lysine" evidence="10">
    <location>
        <position position="75"/>
    </location>
</feature>
<feature type="modified residue" description="N6-(2-hydroxyisobutyryl)lysine" evidence="10">
    <location>
        <position position="76"/>
    </location>
</feature>
<feature type="modified residue" description="N6-(2-hydroxyisobutyryl)lysine; alternate" evidence="10">
    <location>
        <position position="96"/>
    </location>
</feature>
<feature type="modified residue" description="N6-glutaryllysine; alternate" evidence="3">
    <location>
        <position position="96"/>
    </location>
</feature>
<feature type="modified residue" description="N6-succinyllysine; alternate" evidence="1">
    <location>
        <position position="96"/>
    </location>
</feature>
<feature type="modified residue" description="N5-methylglutamine" evidence="9">
    <location>
        <position position="105"/>
    </location>
</feature>
<feature type="modified residue" description="N6-(2-hydroxyisobutyryl)lysine; alternate" evidence="10">
    <location>
        <position position="119"/>
    </location>
</feature>
<feature type="modified residue" description="N6-crotonyllysine; alternate" evidence="8">
    <location>
        <position position="119"/>
    </location>
</feature>
<feature type="modified residue" description="N6-glutaryllysine; alternate" evidence="3">
    <location>
        <position position="119"/>
    </location>
</feature>
<feature type="modified residue" description="N6-(beta-hydroxybutyryl)lysine; alternate" evidence="11">
    <location>
        <position position="120"/>
    </location>
</feature>
<feature type="modified residue" description="N6-crotonyllysine; alternate" evidence="3">
    <location>
        <position position="120"/>
    </location>
</feature>
<feature type="modified residue" description="N6-glutaryllysine; alternate" evidence="3">
    <location>
        <position position="120"/>
    </location>
</feature>
<feature type="modified residue" description="Phosphothreonine; by DCAF1" evidence="1">
    <location>
        <position position="121"/>
    </location>
</feature>
<feature type="modified residue" description="N6-(beta-hydroxybutyryl)lysine; alternate" evidence="11">
    <location>
        <position position="126"/>
    </location>
</feature>
<feature type="modified residue" description="N6-crotonyllysine; alternate" evidence="3">
    <location>
        <position position="126"/>
    </location>
</feature>
<feature type="modified residue" description="N6-glutaryllysine; alternate" evidence="3">
    <location>
        <position position="126"/>
    </location>
</feature>
<feature type="cross-link" description="Glycyl lysine isopeptide (Lys-Gly) (interchain with G-Cter in ubiquitin)" evidence="1">
    <location>
        <position position="14"/>
    </location>
</feature>
<feature type="cross-link" description="Glycyl lysine isopeptide (Lys-Gly) (interchain with G-Cter in ubiquitin)" evidence="1">
    <location>
        <position position="16"/>
    </location>
</feature>
<feature type="cross-link" description="Glycyl lysine isopeptide (Lys-Gly) (interchain with G-Cter in ubiquitin); alternate" evidence="5 6">
    <location>
        <position position="120"/>
    </location>
</feature>
<organism>
    <name type="scientific">Mus musculus</name>
    <name type="common">Mouse</name>
    <dbReference type="NCBI Taxonomy" id="10090"/>
    <lineage>
        <taxon>Eukaryota</taxon>
        <taxon>Metazoa</taxon>
        <taxon>Chordata</taxon>
        <taxon>Craniata</taxon>
        <taxon>Vertebrata</taxon>
        <taxon>Euteleostomi</taxon>
        <taxon>Mammalia</taxon>
        <taxon>Eutheria</taxon>
        <taxon>Euarchontoglires</taxon>
        <taxon>Glires</taxon>
        <taxon>Rodentia</taxon>
        <taxon>Myomorpha</taxon>
        <taxon>Muroidea</taxon>
        <taxon>Muridae</taxon>
        <taxon>Murinae</taxon>
        <taxon>Mus</taxon>
        <taxon>Mus</taxon>
    </lineage>
</organism>
<keyword id="KW-0007">Acetylation</keyword>
<keyword id="KW-0158">Chromosome</keyword>
<keyword id="KW-0164">Citrullination</keyword>
<keyword id="KW-0238">DNA-binding</keyword>
<keyword id="KW-0379">Hydroxylation</keyword>
<keyword id="KW-1017">Isopeptide bond</keyword>
<keyword id="KW-0488">Methylation</keyword>
<keyword id="KW-0544">Nucleosome core</keyword>
<keyword id="KW-0539">Nucleus</keyword>
<keyword id="KW-0597">Phosphoprotein</keyword>
<keyword id="KW-1185">Reference proteome</keyword>
<keyword id="KW-0832">Ubl conjugation</keyword>
<reference key="1">
    <citation type="journal article" date="2002" name="Genomics">
        <title>The human and mouse replication-dependent histone genes.</title>
        <authorList>
            <person name="Marzluff W.F."/>
            <person name="Gongidi P."/>
            <person name="Woods K.R."/>
            <person name="Jin J."/>
            <person name="Maltais L.J."/>
        </authorList>
    </citation>
    <scope>NUCLEOTIDE SEQUENCE [GENOMIC DNA]</scope>
</reference>
<reference key="2">
    <citation type="journal article" date="2009" name="PLoS Biol.">
        <title>Lineage-specific biology revealed by a finished genome assembly of the mouse.</title>
        <authorList>
            <person name="Church D.M."/>
            <person name="Goodstadt L."/>
            <person name="Hillier L.W."/>
            <person name="Zody M.C."/>
            <person name="Goldstein S."/>
            <person name="She X."/>
            <person name="Bult C.J."/>
            <person name="Agarwala R."/>
            <person name="Cherry J.L."/>
            <person name="DiCuccio M."/>
            <person name="Hlavina W."/>
            <person name="Kapustin Y."/>
            <person name="Meric P."/>
            <person name="Maglott D."/>
            <person name="Birtle Z."/>
            <person name="Marques A.C."/>
            <person name="Graves T."/>
            <person name="Zhou S."/>
            <person name="Teague B."/>
            <person name="Potamousis K."/>
            <person name="Churas C."/>
            <person name="Place M."/>
            <person name="Herschleb J."/>
            <person name="Runnheim R."/>
            <person name="Forrest D."/>
            <person name="Amos-Landgraf J."/>
            <person name="Schwartz D.C."/>
            <person name="Cheng Z."/>
            <person name="Lindblad-Toh K."/>
            <person name="Eichler E.E."/>
            <person name="Ponting C.P."/>
        </authorList>
    </citation>
    <scope>NUCLEOTIDE SEQUENCE [LARGE SCALE GENOMIC DNA]</scope>
    <source>
        <strain>C57BL/6J</strain>
    </source>
</reference>
<reference key="3">
    <citation type="journal article" date="2004" name="Genome Res.">
        <title>The status, quality, and expansion of the NIH full-length cDNA project: the Mammalian Gene Collection (MGC).</title>
        <authorList>
            <consortium name="The MGC Project Team"/>
        </authorList>
    </citation>
    <scope>NUCLEOTIDE SEQUENCE [LARGE SCALE MRNA]</scope>
    <source>
        <strain evidence="14">C57BL/6J</strain>
        <tissue evidence="14">Thymus</tissue>
    </source>
</reference>
<reference key="4">
    <citation type="journal article" date="1981" name="J. Biol. Chem.">
        <title>Quantitative determination of histone modification. H2A acetylation and phosphorylation.</title>
        <authorList>
            <person name="Pantazis P."/>
            <person name="Bonner W.M."/>
        </authorList>
    </citation>
    <scope>PHOSPHORYLATION AT SER-2</scope>
    <scope>ACETYLATION AT SER-2 AND LYS-6</scope>
</reference>
<reference key="5">
    <citation type="journal article" date="2004" name="Dev. Cell">
        <title>Polycomb group proteins Ring1A/B link ubiquitylation of histone H2A to heritable gene silencing and X inactivation.</title>
        <authorList>
            <person name="de Napoles M."/>
            <person name="Mermoud J.E."/>
            <person name="Wakao R."/>
            <person name="Tang Y.A."/>
            <person name="Endoh M."/>
            <person name="Appanah R."/>
            <person name="Nesterova T.B."/>
            <person name="Silva J."/>
            <person name="Otte A.P."/>
            <person name="Vidal M."/>
            <person name="Koseki H."/>
            <person name="Brockdorff N."/>
        </authorList>
    </citation>
    <scope>UBIQUITINATION AT LYS-120</scope>
</reference>
<reference key="6">
    <citation type="journal article" date="2004" name="J. Biol. Chem.">
        <title>Ring1b-mediated H2A ubiquitination associates with inactive X chromosomes and is involved in initiation of X inactivation.</title>
        <authorList>
            <person name="Fang J."/>
            <person name="Chen T."/>
            <person name="Chadwick B."/>
            <person name="Li E."/>
            <person name="Zhang Y."/>
        </authorList>
    </citation>
    <scope>UBIQUITINATION AT LYS-120</scope>
</reference>
<reference key="7">
    <citation type="journal article" date="2006" name="Nat. Cell Biol.">
        <title>Blimp1 associates with Prmt5 and directs histone arginine methylation in mouse germ cells.</title>
        <authorList>
            <person name="Ancelin K."/>
            <person name="Lange U.C."/>
            <person name="Hajkova P."/>
            <person name="Schneider R."/>
            <person name="Bannister A.J."/>
            <person name="Kouzarides T."/>
            <person name="Surani M.A."/>
        </authorList>
    </citation>
    <scope>METHYLATION AT ARG-4</scope>
</reference>
<reference key="8">
    <citation type="journal article" date="2011" name="Cell">
        <title>Identification of 67 histone marks and histone lysine crotonylation as a new type of histone modification.</title>
        <authorList>
            <person name="Tan M."/>
            <person name="Luo H."/>
            <person name="Lee S."/>
            <person name="Jin F."/>
            <person name="Yang J.S."/>
            <person name="Montellier E."/>
            <person name="Buchou T."/>
            <person name="Cheng Z."/>
            <person name="Rousseaux S."/>
            <person name="Rajagopal N."/>
            <person name="Lu Z."/>
            <person name="Ye Z."/>
            <person name="Zhu Q."/>
            <person name="Wysocka J."/>
            <person name="Ye Y."/>
            <person name="Khochbin S."/>
            <person name="Ren B."/>
            <person name="Zhao Y."/>
        </authorList>
    </citation>
    <scope>CROTONYLATION AT LYS-37 AND LYS-119</scope>
</reference>
<reference key="9">
    <citation type="journal article" date="2014" name="Nat. Chem. Biol.">
        <title>Lysine 2-hydroxyisobutyrylation is a widely distributed active histone mark.</title>
        <authorList>
            <person name="Dai L."/>
            <person name="Peng C."/>
            <person name="Montellier E."/>
            <person name="Lu Z."/>
            <person name="Chen Y."/>
            <person name="Ishii H."/>
            <person name="Debernardi A."/>
            <person name="Buchou T."/>
            <person name="Rousseaux S."/>
            <person name="Jin F."/>
            <person name="Sabari B.R."/>
            <person name="Deng Z."/>
            <person name="Allis C.D."/>
            <person name="Ren B."/>
            <person name="Khochbin S."/>
            <person name="Zhao Y."/>
        </authorList>
    </citation>
    <scope>HYDROXYBUTYRYLATION AT LYS-6; LYS-10; LYS-37; LYS-75; LYS-76; LYS-96 AND LYS-119</scope>
</reference>
<reference key="10">
    <citation type="journal article" date="2014" name="Nature">
        <title>Glutamine methylation in histone H2A is an RNA-polymerase-I-dedicated modification.</title>
        <authorList>
            <person name="Tessarz P."/>
            <person name="Santos-Rosa H."/>
            <person name="Robson S.C."/>
            <person name="Sylvestersen K.B."/>
            <person name="Nelson C.J."/>
            <person name="Nielsen M.L."/>
            <person name="Kouzarides T."/>
        </authorList>
    </citation>
    <scope>METHYLATION AT GLN-105</scope>
</reference>
<reference key="11">
    <citation type="journal article" date="2016" name="Mol. Cell">
        <title>Metabolic regulation of gene expression by histone lysine beta-hydroxybutyrylation.</title>
        <authorList>
            <person name="Xie Z."/>
            <person name="Zhang D."/>
            <person name="Chung D."/>
            <person name="Tang Z."/>
            <person name="Huang H."/>
            <person name="Dai L."/>
            <person name="Qi S."/>
            <person name="Li J."/>
            <person name="Colak G."/>
            <person name="Chen Y."/>
            <person name="Xia C."/>
            <person name="Peng C."/>
            <person name="Ruan H."/>
            <person name="Kirkey M."/>
            <person name="Wang D."/>
            <person name="Jensen L.M."/>
            <person name="Kwon O.K."/>
            <person name="Lee S."/>
            <person name="Pletcher S.D."/>
            <person name="Tan M."/>
            <person name="Lombard D.B."/>
            <person name="White K.P."/>
            <person name="Zhao H."/>
            <person name="Li J."/>
            <person name="Roeder R.G."/>
            <person name="Yang X."/>
            <person name="Zhao Y."/>
        </authorList>
    </citation>
    <scope>HYDROXYBUTYRYLATION AT LYS-6; LYS-37; LYS-120 AND LYS-126</scope>
</reference>
<dbReference type="EMBL" id="AY158915">
    <property type="protein sequence ID" value="AAO06225.1"/>
    <property type="molecule type" value="Genomic_DNA"/>
</dbReference>
<dbReference type="EMBL" id="AL590614">
    <property type="status" value="NOT_ANNOTATED_CDS"/>
    <property type="molecule type" value="Genomic_DNA"/>
</dbReference>
<dbReference type="EMBL" id="BC065803">
    <property type="protein sequence ID" value="AAH65803.1"/>
    <property type="molecule type" value="mRNA"/>
</dbReference>
<dbReference type="CCDS" id="CCDS26307.1"/>
<dbReference type="RefSeq" id="NP_835493.1">
    <property type="nucleotide sequence ID" value="NM_178186.3"/>
</dbReference>
<dbReference type="SMR" id="C0HKE5"/>
<dbReference type="FunCoup" id="C0HKE5">
    <property type="interactions" value="860"/>
</dbReference>
<dbReference type="iPTMnet" id="C0HKE5"/>
<dbReference type="jPOST" id="C0HKE5"/>
<dbReference type="Pumba" id="C0HKE5"/>
<dbReference type="Antibodypedia" id="72464">
    <property type="antibodies" value="208 antibodies from 18 providers"/>
</dbReference>
<dbReference type="DNASU" id="319172"/>
<dbReference type="Ensembl" id="ENSMUST00000070124.5">
    <property type="protein sequence ID" value="ENSMUSP00000088285.3"/>
    <property type="gene ID" value="ENSMUSG00000071516.3"/>
</dbReference>
<dbReference type="Ensembl" id="ENSMUST00000078369.3">
    <property type="protein sequence ID" value="ENSMUSP00000077477.2"/>
    <property type="gene ID" value="ENSMUSG00000061615.3"/>
</dbReference>
<dbReference type="Ensembl" id="ENSMUST00000081342.7">
    <property type="protein sequence ID" value="ENSMUSP00000080088.6"/>
    <property type="gene ID" value="ENSMUSG00000094777.3"/>
</dbReference>
<dbReference type="Ensembl" id="ENSMUST00000090776.7">
    <property type="protein sequence ID" value="ENSMUSP00000088281.5"/>
    <property type="gene ID" value="ENSMUSG00000071478.7"/>
</dbReference>
<dbReference type="Ensembl" id="ENSMUST00000091741.6">
    <property type="protein sequence ID" value="ENSMUSP00000089335.5"/>
    <property type="gene ID" value="ENSMUSG00000069301.6"/>
</dbReference>
<dbReference type="Ensembl" id="ENSMUST00000091745.6">
    <property type="protein sequence ID" value="ENSMUSP00000089339.6"/>
    <property type="gene ID" value="ENSMUSG00000094248.2"/>
</dbReference>
<dbReference type="Ensembl" id="ENSMUST00000091751.3">
    <property type="protein sequence ID" value="ENSMUSP00000089345.3"/>
    <property type="gene ID" value="ENSMUSG00000069309.3"/>
</dbReference>
<dbReference type="Ensembl" id="ENSMUST00000102969.6">
    <property type="protein sequence ID" value="ENSMUSP00000100034.4"/>
    <property type="gene ID" value="ENSMUSG00000069272.7"/>
</dbReference>
<dbReference type="Ensembl" id="ENSMUST00000171127.4">
    <property type="protein sequence ID" value="ENSMUSP00000127684.2"/>
    <property type="gene ID" value="ENSMUSG00000069270.7"/>
</dbReference>
<dbReference type="GeneID" id="319167"/>
<dbReference type="KEGG" id="mmu:319164"/>
<dbReference type="KEGG" id="mmu:319165"/>
<dbReference type="KEGG" id="mmu:319166"/>
<dbReference type="KEGG" id="mmu:319167"/>
<dbReference type="KEGG" id="mmu:319170"/>
<dbReference type="KEGG" id="mmu:319171"/>
<dbReference type="KEGG" id="mmu:319172"/>
<dbReference type="KEGG" id="mmu:319191"/>
<dbReference type="KEGG" id="mmu:665433"/>
<dbReference type="AGR" id="MGI:2448293"/>
<dbReference type="CTD" id="3012"/>
<dbReference type="CTD" id="3013"/>
<dbReference type="CTD" id="319170"/>
<dbReference type="CTD" id="319171"/>
<dbReference type="CTD" id="665433"/>
<dbReference type="CTD" id="8329"/>
<dbReference type="CTD" id="8334"/>
<dbReference type="CTD" id="8335"/>
<dbReference type="CTD" id="8969"/>
<dbReference type="MGI" id="MGI:2448293">
    <property type="gene designation" value="H2ac11"/>
</dbReference>
<dbReference type="VEuPathDB" id="HostDB:ENSMUSG00000061615"/>
<dbReference type="VEuPathDB" id="HostDB:ENSMUSG00000069270"/>
<dbReference type="VEuPathDB" id="HostDB:ENSMUSG00000069272"/>
<dbReference type="VEuPathDB" id="HostDB:ENSMUSG00000069301"/>
<dbReference type="VEuPathDB" id="HostDB:ENSMUSG00000069309"/>
<dbReference type="VEuPathDB" id="HostDB:ENSMUSG00000071478"/>
<dbReference type="VEuPathDB" id="HostDB:ENSMUSG00000071516"/>
<dbReference type="VEuPathDB" id="HostDB:ENSMUSG00000094248"/>
<dbReference type="VEuPathDB" id="HostDB:ENSMUSG00000094777"/>
<dbReference type="InParanoid" id="C0HKE5"/>
<dbReference type="OMA" id="TEDCRQT"/>
<dbReference type="OrthoDB" id="9610409at2759"/>
<dbReference type="Reactome" id="R-MMU-110330">
    <property type="pathway name" value="Recognition and association of DNA glycosylase with site containing an affected purine"/>
</dbReference>
<dbReference type="Reactome" id="R-MMU-110331">
    <property type="pathway name" value="Cleavage of the damaged purine"/>
</dbReference>
<dbReference type="Reactome" id="R-MMU-212300">
    <property type="pathway name" value="PRC2 methylates histones and DNA"/>
</dbReference>
<dbReference type="Reactome" id="R-MMU-2299718">
    <property type="pathway name" value="Condensation of Prophase Chromosomes"/>
</dbReference>
<dbReference type="Reactome" id="R-MMU-2559586">
    <property type="pathway name" value="DNA Damage/Telomere Stress Induced Senescence"/>
</dbReference>
<dbReference type="Reactome" id="R-MMU-3214815">
    <property type="pathway name" value="HDACs deacetylate histones"/>
</dbReference>
<dbReference type="Reactome" id="R-MMU-3214858">
    <property type="pathway name" value="RMTs methylate histone arginines"/>
</dbReference>
<dbReference type="Reactome" id="R-MMU-5689603">
    <property type="pathway name" value="UCH proteinases"/>
</dbReference>
<dbReference type="Reactome" id="R-MMU-5689880">
    <property type="pathway name" value="Ub-specific processing proteases"/>
</dbReference>
<dbReference type="Reactome" id="R-MMU-5689901">
    <property type="pathway name" value="Metalloprotease DUBs"/>
</dbReference>
<dbReference type="Reactome" id="R-MMU-606279">
    <property type="pathway name" value="Deposition of new CENPA-containing nucleosomes at the centromere"/>
</dbReference>
<dbReference type="Reactome" id="R-MMU-8936459">
    <property type="pathway name" value="RUNX1 regulates genes involved in megakaryocyte differentiation and platelet function"/>
</dbReference>
<dbReference type="Reactome" id="R-MMU-9670095">
    <property type="pathway name" value="Inhibition of DNA recombination at telomere"/>
</dbReference>
<dbReference type="Reactome" id="R-MMU-9841922">
    <property type="pathway name" value="MLL4 and MLL3 complexes regulate expression of PPARG target genes in adipogenesis and hepatic steatosis"/>
</dbReference>
<dbReference type="Reactome" id="R-MMU-9843940">
    <property type="pathway name" value="Regulation of endogenous retroelements by KRAB-ZFP proteins"/>
</dbReference>
<dbReference type="BioGRID-ORCS" id="319164">
    <property type="hits" value="12 hits in 61 CRISPR screens"/>
</dbReference>
<dbReference type="BioGRID-ORCS" id="319165">
    <property type="hits" value="11 hits in 41 CRISPR screens"/>
</dbReference>
<dbReference type="BioGRID-ORCS" id="319166">
    <property type="hits" value="13 hits in 57 CRISPR screens"/>
</dbReference>
<dbReference type="BioGRID-ORCS" id="319167">
    <property type="hits" value="12 hits in 44 CRISPR screens"/>
</dbReference>
<dbReference type="BioGRID-ORCS" id="319170">
    <property type="hits" value="14 hits in 59 CRISPR screens"/>
</dbReference>
<dbReference type="BioGRID-ORCS" id="319171">
    <property type="hits" value="14 hits in 43 CRISPR screens"/>
</dbReference>
<dbReference type="BioGRID-ORCS" id="319172">
    <property type="hits" value="9 hits in 57 CRISPR screens"/>
</dbReference>
<dbReference type="BioGRID-ORCS" id="319191">
    <property type="hits" value="10 hits in 58 CRISPR screens"/>
</dbReference>
<dbReference type="BioGRID-ORCS" id="665433">
    <property type="hits" value="10 hits in 42 CRISPR screens"/>
</dbReference>
<dbReference type="PRO" id="PR:C0HKE5"/>
<dbReference type="Proteomes" id="UP000000589">
    <property type="component" value="Chromosome 13"/>
</dbReference>
<dbReference type="RNAct" id="C0HKE5">
    <property type="molecule type" value="protein"/>
</dbReference>
<dbReference type="Bgee" id="ENSMUSG00000061615">
    <property type="expression patterns" value="Expressed in uterus and 49 other cell types or tissues"/>
</dbReference>
<dbReference type="ExpressionAtlas" id="C0HKE5">
    <property type="expression patterns" value="baseline and differential"/>
</dbReference>
<dbReference type="GO" id="GO:0000786">
    <property type="term" value="C:nucleosome"/>
    <property type="evidence" value="ECO:0007669"/>
    <property type="project" value="UniProtKB-KW"/>
</dbReference>
<dbReference type="GO" id="GO:0005634">
    <property type="term" value="C:nucleus"/>
    <property type="evidence" value="ECO:0007669"/>
    <property type="project" value="UniProtKB-SubCell"/>
</dbReference>
<dbReference type="GO" id="GO:0003677">
    <property type="term" value="F:DNA binding"/>
    <property type="evidence" value="ECO:0007669"/>
    <property type="project" value="UniProtKB-KW"/>
</dbReference>
<dbReference type="GO" id="GO:0046982">
    <property type="term" value="F:protein heterodimerization activity"/>
    <property type="evidence" value="ECO:0007669"/>
    <property type="project" value="InterPro"/>
</dbReference>
<dbReference type="GO" id="GO:0030527">
    <property type="term" value="F:structural constituent of chromatin"/>
    <property type="evidence" value="ECO:0007669"/>
    <property type="project" value="InterPro"/>
</dbReference>
<dbReference type="CDD" id="cd00074">
    <property type="entry name" value="HFD_H2A"/>
    <property type="match status" value="1"/>
</dbReference>
<dbReference type="FunFam" id="1.10.20.10:FF:000103">
    <property type="entry name" value="Histone H2A type 1"/>
    <property type="match status" value="1"/>
</dbReference>
<dbReference type="Gene3D" id="1.10.20.10">
    <property type="entry name" value="Histone, subunit A"/>
    <property type="match status" value="1"/>
</dbReference>
<dbReference type="InterPro" id="IPR009072">
    <property type="entry name" value="Histone-fold"/>
</dbReference>
<dbReference type="InterPro" id="IPR002119">
    <property type="entry name" value="Histone_H2A"/>
</dbReference>
<dbReference type="InterPro" id="IPR007125">
    <property type="entry name" value="Histone_H2A/H2B/H3"/>
</dbReference>
<dbReference type="InterPro" id="IPR032454">
    <property type="entry name" value="Histone_H2A_C"/>
</dbReference>
<dbReference type="InterPro" id="IPR032458">
    <property type="entry name" value="Histone_H2A_CS"/>
</dbReference>
<dbReference type="PANTHER" id="PTHR23430">
    <property type="entry name" value="HISTONE H2A"/>
    <property type="match status" value="1"/>
</dbReference>
<dbReference type="Pfam" id="PF00125">
    <property type="entry name" value="Histone"/>
    <property type="match status" value="1"/>
</dbReference>
<dbReference type="Pfam" id="PF16211">
    <property type="entry name" value="Histone_H2A_C"/>
    <property type="match status" value="1"/>
</dbReference>
<dbReference type="PRINTS" id="PR00620">
    <property type="entry name" value="HISTONEH2A"/>
</dbReference>
<dbReference type="SMART" id="SM00414">
    <property type="entry name" value="H2A"/>
    <property type="match status" value="1"/>
</dbReference>
<dbReference type="SUPFAM" id="SSF47113">
    <property type="entry name" value="Histone-fold"/>
    <property type="match status" value="1"/>
</dbReference>
<dbReference type="PROSITE" id="PS00046">
    <property type="entry name" value="HISTONE_H2A"/>
    <property type="match status" value="1"/>
</dbReference>
<proteinExistence type="evidence at protein level"/>
<sequence>MSGRGKQGGKARAKAKTRSSRAGLQFPVGRVHRLLRKGNYSERVGAGAPVYLAAVLEYLTAEILELAGNAARDNKKTRIIPRHLQLAIRNDEELNKLLGRVTIAQGGVLPNIQAVLLPKKTESHHKAKGK</sequence>
<evidence type="ECO:0000250" key="1">
    <source>
        <dbReference type="UniProtKB" id="P04908"/>
    </source>
</evidence>
<evidence type="ECO:0000250" key="2">
    <source>
        <dbReference type="UniProtKB" id="P0C0S5"/>
    </source>
</evidence>
<evidence type="ECO:0000250" key="3">
    <source>
        <dbReference type="UniProtKB" id="P0C0S8"/>
    </source>
</evidence>
<evidence type="ECO:0000256" key="4">
    <source>
        <dbReference type="SAM" id="MobiDB-lite"/>
    </source>
</evidence>
<evidence type="ECO:0000269" key="5">
    <source>
    </source>
</evidence>
<evidence type="ECO:0000269" key="6">
    <source>
    </source>
</evidence>
<evidence type="ECO:0000269" key="7">
    <source>
    </source>
</evidence>
<evidence type="ECO:0000269" key="8">
    <source>
    </source>
</evidence>
<evidence type="ECO:0000269" key="9">
    <source>
    </source>
</evidence>
<evidence type="ECO:0000269" key="10">
    <source>
    </source>
</evidence>
<evidence type="ECO:0000269" key="11">
    <source>
    </source>
</evidence>
<evidence type="ECO:0000269" key="12">
    <source>
    </source>
</evidence>
<evidence type="ECO:0000305" key="13"/>
<evidence type="ECO:0000312" key="14">
    <source>
        <dbReference type="EMBL" id="AAH65803.1"/>
    </source>
</evidence>
<evidence type="ECO:0000312" key="15">
    <source>
        <dbReference type="MGI" id="MGI:2448293"/>
    </source>
</evidence>
<protein>
    <recommendedName>
        <fullName evidence="13">Histone H2A type 1-G</fullName>
    </recommendedName>
</protein>
<gene>
    <name evidence="15" type="primary">H2ac11</name>
    <name evidence="15" type="synonym">Hist1h2ag</name>
</gene>
<name>H2A1G_MOUSE</name>
<comment type="function">
    <text>Core component of nucleosome. Nucleosomes wrap and compact DNA into chromatin, limiting DNA accessibility to the cellular machineries which require DNA as a template. Histones thereby play a central role in transcription regulation, DNA repair, DNA replication and chromosomal stability. DNA accessibility is regulated via a complex set of post-translational modifications of histones, also called histone code, and nucleosome remodeling.</text>
</comment>
<comment type="subunit">
    <text>The nucleosome is a histone octamer containing two molecules each of H2A, H2B, H3 and H4 assembled in one H3-H4 heterotetramer and two H2A-H2B heterodimers. The octamer wraps approximately 147 bp of DNA.</text>
</comment>
<comment type="subcellular location">
    <subcellularLocation>
        <location>Nucleus</location>
    </subcellularLocation>
    <subcellularLocation>
        <location>Chromosome</location>
    </subcellularLocation>
</comment>
<comment type="PTM">
    <text evidence="3">Deiminated on Arg-4 in granulocytes upon calcium entry.</text>
</comment>
<comment type="PTM">
    <text evidence="3 5 6 9">Monoubiquitination of Lys-120 (H2AK119Ub) by RING1, TRIM37 and RNF2/RING2 complex gives a specific tag for epigenetic transcriptional repression and participates in X chromosome inactivation of female mammals. It is involved in the initiation of both imprinted and random X inactivation. Ubiquitinated H2A is enriched in inactive X chromosome chromatin. Ubiquitination of H2A functions downstream of methylation of 'Lys-27' of histone H3 (H3K27me). H2AK119Ub by RNF2/RING2 can also be induced by ultraviolet and may be involved in DNA repair. Following DNA double-strand breaks (DSBs), it is ubiquitinated through 'Lys-63' linkage of ubiquitin moieties by the E2 ligase UBE2N and the E3 ligases RNF8 and RNF168, leading to the recruitment of repair proteins to sites of DNA damage. Ubiquitination at Lys-14 and Lys-16 (H2AK13Ub and H2AK15Ub, respectively) in response to DNA damage is initiated by RNF168 that mediates monoubiquitination at these 2 sites, and 'Lys-63'-linked ubiquitin are then conjugated to monoubiquitin; RNF8 is able to extend 'Lys-63'-linked ubiquitin chains in vitro. Deubiquitinated by USP51 at Lys-14 and Lys-16 (H2AK13Ub and H2AK15Ub, respectively) after damaged DNA is repaired (By similarity). H2AK119Ub and ionizing radiation-induced 'Lys-63'-linked ubiquitination (H2AK13Ub and H2AK15Ub) are distinct events.</text>
</comment>
<comment type="PTM">
    <text evidence="3 12">Phosphorylation on Ser-2 (H2AS1ph) is enhanced during mitosis. Phosphorylation on Ser-2 by RPS6KA5/MSK1 directly represses transcription. Acetylation of H3 inhibits Ser-2 phosphorylation by RPS6KA5/MSK1. Phosphorylation at Thr-121 (H2AT120ph) by DCAF1 is present in the regulatory region of many tumor suppresor genes and down-regulates their transcription.</text>
</comment>
<comment type="PTM">
    <text evidence="7">Symmetric dimethylation on Arg-4 by the PRDM1/PRMT5 complex may play a crucial role in the germ-cell lineage.</text>
</comment>
<comment type="PTM">
    <text evidence="9">Glutamine methylation at Gln-105 (H2AQ104me) by FBL is specifically dedicated to polymerase I. It is present at 35S ribosomal DNA locus and impairs binding of the FACT complex.</text>
</comment>
<comment type="PTM">
    <text evidence="8">Crotonylation (Kcr) is specifically present in male germ cells and marks testis-specific genes in post-meiotic cells, including X-linked genes that escape sex chromosome inactivation in haploid cells. Crotonylation marks active promoters and enhancers and confers resistance to transcriptional repressors. It is also associated with post-meiotically activated genes on autosomes.</text>
</comment>
<comment type="PTM">
    <text evidence="11">Hydroxybutyrylation of histones is induced by starvation.</text>
</comment>
<comment type="PTM">
    <text evidence="2">Lactylated in macrophages by EP300/P300 by using lactoyl-CoA directly derived from endogenous or exogenous lactate, leading to stimulates gene transcription.</text>
</comment>
<comment type="similarity">
    <text evidence="13">Belongs to the histone H2A family.</text>
</comment>